<organism>
    <name type="scientific">Prochlorococcus marinus (strain MIT 9303)</name>
    <dbReference type="NCBI Taxonomy" id="59922"/>
    <lineage>
        <taxon>Bacteria</taxon>
        <taxon>Bacillati</taxon>
        <taxon>Cyanobacteriota</taxon>
        <taxon>Cyanophyceae</taxon>
        <taxon>Synechococcales</taxon>
        <taxon>Prochlorococcaceae</taxon>
        <taxon>Prochlorococcus</taxon>
    </lineage>
</organism>
<accession>A2CAX1</accession>
<feature type="chain" id="PRO_0000325370" description="3-phosphoshikimate 1-carboxyvinyltransferase">
    <location>
        <begin position="1"/>
        <end position="441"/>
    </location>
</feature>
<feature type="region of interest" description="Disordered" evidence="2">
    <location>
        <begin position="1"/>
        <end position="21"/>
    </location>
</feature>
<feature type="compositionally biased region" description="Polar residues" evidence="2">
    <location>
        <begin position="1"/>
        <end position="10"/>
    </location>
</feature>
<feature type="active site" description="Proton acceptor" evidence="1">
    <location>
        <position position="328"/>
    </location>
</feature>
<feature type="binding site" evidence="1">
    <location>
        <position position="29"/>
    </location>
    <ligand>
        <name>3-phosphoshikimate</name>
        <dbReference type="ChEBI" id="CHEBI:145989"/>
    </ligand>
</feature>
<feature type="binding site" evidence="1">
    <location>
        <position position="29"/>
    </location>
    <ligand>
        <name>phosphoenolpyruvate</name>
        <dbReference type="ChEBI" id="CHEBI:58702"/>
    </ligand>
</feature>
<feature type="binding site" evidence="1">
    <location>
        <position position="30"/>
    </location>
    <ligand>
        <name>3-phosphoshikimate</name>
        <dbReference type="ChEBI" id="CHEBI:145989"/>
    </ligand>
</feature>
<feature type="binding site" evidence="1">
    <location>
        <position position="34"/>
    </location>
    <ligand>
        <name>3-phosphoshikimate</name>
        <dbReference type="ChEBI" id="CHEBI:145989"/>
    </ligand>
</feature>
<feature type="binding site" evidence="1">
    <location>
        <position position="103"/>
    </location>
    <ligand>
        <name>phosphoenolpyruvate</name>
        <dbReference type="ChEBI" id="CHEBI:58702"/>
    </ligand>
</feature>
<feature type="binding site" evidence="1">
    <location>
        <position position="132"/>
    </location>
    <ligand>
        <name>phosphoenolpyruvate</name>
        <dbReference type="ChEBI" id="CHEBI:58702"/>
    </ligand>
</feature>
<feature type="binding site" evidence="1">
    <location>
        <position position="177"/>
    </location>
    <ligand>
        <name>3-phosphoshikimate</name>
        <dbReference type="ChEBI" id="CHEBI:145989"/>
    </ligand>
</feature>
<feature type="binding site" evidence="1">
    <location>
        <position position="179"/>
    </location>
    <ligand>
        <name>3-phosphoshikimate</name>
        <dbReference type="ChEBI" id="CHEBI:145989"/>
    </ligand>
</feature>
<feature type="binding site" evidence="1">
    <location>
        <position position="179"/>
    </location>
    <ligand>
        <name>phosphoenolpyruvate</name>
        <dbReference type="ChEBI" id="CHEBI:58702"/>
    </ligand>
</feature>
<feature type="binding site" evidence="1">
    <location>
        <position position="328"/>
    </location>
    <ligand>
        <name>3-phosphoshikimate</name>
        <dbReference type="ChEBI" id="CHEBI:145989"/>
    </ligand>
</feature>
<feature type="binding site" evidence="1">
    <location>
        <position position="355"/>
    </location>
    <ligand>
        <name>3-phosphoshikimate</name>
        <dbReference type="ChEBI" id="CHEBI:145989"/>
    </ligand>
</feature>
<feature type="binding site" evidence="1">
    <location>
        <position position="359"/>
    </location>
    <ligand>
        <name>phosphoenolpyruvate</name>
        <dbReference type="ChEBI" id="CHEBI:58702"/>
    </ligand>
</feature>
<feature type="binding site" evidence="1">
    <location>
        <position position="401"/>
    </location>
    <ligand>
        <name>phosphoenolpyruvate</name>
        <dbReference type="ChEBI" id="CHEBI:58702"/>
    </ligand>
</feature>
<dbReference type="EC" id="2.5.1.19" evidence="1"/>
<dbReference type="EMBL" id="CP000554">
    <property type="protein sequence ID" value="ABM78631.1"/>
    <property type="molecule type" value="Genomic_DNA"/>
</dbReference>
<dbReference type="RefSeq" id="WP_011826514.1">
    <property type="nucleotide sequence ID" value="NC_008820.1"/>
</dbReference>
<dbReference type="SMR" id="A2CAX1"/>
<dbReference type="STRING" id="59922.P9303_18891"/>
<dbReference type="KEGG" id="pmf:P9303_18891"/>
<dbReference type="HOGENOM" id="CLU_024321_0_1_3"/>
<dbReference type="BioCyc" id="PMAR59922:G1G80-1638-MONOMER"/>
<dbReference type="UniPathway" id="UPA00053">
    <property type="reaction ID" value="UER00089"/>
</dbReference>
<dbReference type="Proteomes" id="UP000002274">
    <property type="component" value="Chromosome"/>
</dbReference>
<dbReference type="GO" id="GO:0005737">
    <property type="term" value="C:cytoplasm"/>
    <property type="evidence" value="ECO:0007669"/>
    <property type="project" value="UniProtKB-SubCell"/>
</dbReference>
<dbReference type="GO" id="GO:0003866">
    <property type="term" value="F:3-phosphoshikimate 1-carboxyvinyltransferase activity"/>
    <property type="evidence" value="ECO:0007669"/>
    <property type="project" value="UniProtKB-UniRule"/>
</dbReference>
<dbReference type="GO" id="GO:0008652">
    <property type="term" value="P:amino acid biosynthetic process"/>
    <property type="evidence" value="ECO:0007669"/>
    <property type="project" value="UniProtKB-KW"/>
</dbReference>
<dbReference type="GO" id="GO:0009073">
    <property type="term" value="P:aromatic amino acid family biosynthetic process"/>
    <property type="evidence" value="ECO:0007669"/>
    <property type="project" value="UniProtKB-KW"/>
</dbReference>
<dbReference type="GO" id="GO:0009423">
    <property type="term" value="P:chorismate biosynthetic process"/>
    <property type="evidence" value="ECO:0007669"/>
    <property type="project" value="UniProtKB-UniRule"/>
</dbReference>
<dbReference type="CDD" id="cd01556">
    <property type="entry name" value="EPSP_synthase"/>
    <property type="match status" value="1"/>
</dbReference>
<dbReference type="FunFam" id="3.65.10.10:FF:000005">
    <property type="entry name" value="3-phosphoshikimate 1-carboxyvinyltransferase"/>
    <property type="match status" value="1"/>
</dbReference>
<dbReference type="FunFam" id="3.65.10.10:FF:000006">
    <property type="entry name" value="3-phosphoshikimate 1-carboxyvinyltransferase"/>
    <property type="match status" value="1"/>
</dbReference>
<dbReference type="Gene3D" id="3.65.10.10">
    <property type="entry name" value="Enolpyruvate transferase domain"/>
    <property type="match status" value="2"/>
</dbReference>
<dbReference type="HAMAP" id="MF_00210">
    <property type="entry name" value="EPSP_synth"/>
    <property type="match status" value="1"/>
</dbReference>
<dbReference type="InterPro" id="IPR001986">
    <property type="entry name" value="Enolpyruvate_Tfrase_dom"/>
</dbReference>
<dbReference type="InterPro" id="IPR036968">
    <property type="entry name" value="Enolpyruvate_Tfrase_sf"/>
</dbReference>
<dbReference type="InterPro" id="IPR006264">
    <property type="entry name" value="EPSP_synthase"/>
</dbReference>
<dbReference type="InterPro" id="IPR023193">
    <property type="entry name" value="EPSP_synthase_CS"/>
</dbReference>
<dbReference type="InterPro" id="IPR013792">
    <property type="entry name" value="RNA3'P_cycl/enolpyr_Trfase_a/b"/>
</dbReference>
<dbReference type="NCBIfam" id="TIGR01356">
    <property type="entry name" value="aroA"/>
    <property type="match status" value="1"/>
</dbReference>
<dbReference type="PANTHER" id="PTHR21090">
    <property type="entry name" value="AROM/DEHYDROQUINATE SYNTHASE"/>
    <property type="match status" value="1"/>
</dbReference>
<dbReference type="PANTHER" id="PTHR21090:SF5">
    <property type="entry name" value="PENTAFUNCTIONAL AROM POLYPEPTIDE"/>
    <property type="match status" value="1"/>
</dbReference>
<dbReference type="Pfam" id="PF00275">
    <property type="entry name" value="EPSP_synthase"/>
    <property type="match status" value="1"/>
</dbReference>
<dbReference type="PIRSF" id="PIRSF000505">
    <property type="entry name" value="EPSPS"/>
    <property type="match status" value="1"/>
</dbReference>
<dbReference type="SUPFAM" id="SSF55205">
    <property type="entry name" value="EPT/RTPC-like"/>
    <property type="match status" value="1"/>
</dbReference>
<dbReference type="PROSITE" id="PS00104">
    <property type="entry name" value="EPSP_SYNTHASE_1"/>
    <property type="match status" value="1"/>
</dbReference>
<dbReference type="PROSITE" id="PS00885">
    <property type="entry name" value="EPSP_SYNTHASE_2"/>
    <property type="match status" value="1"/>
</dbReference>
<reference key="1">
    <citation type="journal article" date="2007" name="PLoS Genet.">
        <title>Patterns and implications of gene gain and loss in the evolution of Prochlorococcus.</title>
        <authorList>
            <person name="Kettler G.C."/>
            <person name="Martiny A.C."/>
            <person name="Huang K."/>
            <person name="Zucker J."/>
            <person name="Coleman M.L."/>
            <person name="Rodrigue S."/>
            <person name="Chen F."/>
            <person name="Lapidus A."/>
            <person name="Ferriera S."/>
            <person name="Johnson J."/>
            <person name="Steglich C."/>
            <person name="Church G.M."/>
            <person name="Richardson P."/>
            <person name="Chisholm S.W."/>
        </authorList>
    </citation>
    <scope>NUCLEOTIDE SEQUENCE [LARGE SCALE GENOMIC DNA]</scope>
    <source>
        <strain>MIT 9303</strain>
    </source>
</reference>
<comment type="function">
    <text evidence="1">Catalyzes the transfer of the enolpyruvyl moiety of phosphoenolpyruvate (PEP) to the 5-hydroxyl of shikimate-3-phosphate (S3P) to produce enolpyruvyl shikimate-3-phosphate and inorganic phosphate.</text>
</comment>
<comment type="catalytic activity">
    <reaction evidence="1">
        <text>3-phosphoshikimate + phosphoenolpyruvate = 5-O-(1-carboxyvinyl)-3-phosphoshikimate + phosphate</text>
        <dbReference type="Rhea" id="RHEA:21256"/>
        <dbReference type="ChEBI" id="CHEBI:43474"/>
        <dbReference type="ChEBI" id="CHEBI:57701"/>
        <dbReference type="ChEBI" id="CHEBI:58702"/>
        <dbReference type="ChEBI" id="CHEBI:145989"/>
        <dbReference type="EC" id="2.5.1.19"/>
    </reaction>
    <physiologicalReaction direction="left-to-right" evidence="1">
        <dbReference type="Rhea" id="RHEA:21257"/>
    </physiologicalReaction>
</comment>
<comment type="pathway">
    <text evidence="1">Metabolic intermediate biosynthesis; chorismate biosynthesis; chorismate from D-erythrose 4-phosphate and phosphoenolpyruvate: step 6/7.</text>
</comment>
<comment type="subunit">
    <text evidence="1">Monomer.</text>
</comment>
<comment type="subcellular location">
    <subcellularLocation>
        <location evidence="1">Cytoplasm</location>
    </subcellularLocation>
</comment>
<comment type="similarity">
    <text evidence="1">Belongs to the EPSP synthase family.</text>
</comment>
<gene>
    <name evidence="1" type="primary">aroA</name>
    <name type="ordered locus">P9303_18891</name>
</gene>
<sequence length="441" mass="46395">MSVTSTASSSRELRAGGGLSGTVRVPGDKSISHRALLFGAIAEGITTIEGLLPAEDPMSTAACLRAMGATISPIHAGQIVRVEGVGLDGLQEPQDVLDCGNSGTTIRLMLGLLAASKGRHFVLSGDSSLRRRPMNRVGQPLTMMGAKIKGRSNGDFAPLAVSGQKLRGGVIGTPVASAQVKSALLLAALTADGATTVIEPAHSRDHSERMLRAFGADLEVGGEMGRHIRVSPGQKLYGQNIVVPGDISSAAFWLVAGVLVPGAELVVENVGLNPTRTGILEVLQQMEARIEVLNRHEVAGEPVGDLRVRQGPLKPFSINGDIIPRLVDEVPILAVAACFCDGESKITDASELRVKETDRLAVMTRQLTAMGADIDEHADGLTIRGGRTLRGTELDSETDHRVAMSLAVAALLAEGNSRLTGSEAAAVSYPNFWDDLERLHR</sequence>
<name>AROA_PROM3</name>
<keyword id="KW-0028">Amino-acid biosynthesis</keyword>
<keyword id="KW-0057">Aromatic amino acid biosynthesis</keyword>
<keyword id="KW-0963">Cytoplasm</keyword>
<keyword id="KW-0808">Transferase</keyword>
<protein>
    <recommendedName>
        <fullName evidence="1">3-phosphoshikimate 1-carboxyvinyltransferase</fullName>
        <ecNumber evidence="1">2.5.1.19</ecNumber>
    </recommendedName>
    <alternativeName>
        <fullName evidence="1">5-enolpyruvylshikimate-3-phosphate synthase</fullName>
        <shortName evidence="1">EPSP synthase</shortName>
        <shortName evidence="1">EPSPS</shortName>
    </alternativeName>
</protein>
<proteinExistence type="inferred from homology"/>
<evidence type="ECO:0000255" key="1">
    <source>
        <dbReference type="HAMAP-Rule" id="MF_00210"/>
    </source>
</evidence>
<evidence type="ECO:0000256" key="2">
    <source>
        <dbReference type="SAM" id="MobiDB-lite"/>
    </source>
</evidence>